<accession>Q38XU9</accession>
<dbReference type="EC" id="1.5.1.5" evidence="1"/>
<dbReference type="EC" id="3.5.4.9" evidence="1"/>
<dbReference type="EMBL" id="CR936503">
    <property type="protein sequence ID" value="CAI54980.1"/>
    <property type="molecule type" value="Genomic_DNA"/>
</dbReference>
<dbReference type="RefSeq" id="WP_011374385.1">
    <property type="nucleotide sequence ID" value="NC_007576.1"/>
</dbReference>
<dbReference type="SMR" id="Q38XU9"/>
<dbReference type="STRING" id="314315.LCA_0676"/>
<dbReference type="KEGG" id="lsa:LCA_0676"/>
<dbReference type="eggNOG" id="COG0190">
    <property type="taxonomic scope" value="Bacteria"/>
</dbReference>
<dbReference type="HOGENOM" id="CLU_034045_2_1_9"/>
<dbReference type="UniPathway" id="UPA00193"/>
<dbReference type="Proteomes" id="UP000002707">
    <property type="component" value="Chromosome"/>
</dbReference>
<dbReference type="GO" id="GO:0005829">
    <property type="term" value="C:cytosol"/>
    <property type="evidence" value="ECO:0007669"/>
    <property type="project" value="TreeGrafter"/>
</dbReference>
<dbReference type="GO" id="GO:0004477">
    <property type="term" value="F:methenyltetrahydrofolate cyclohydrolase activity"/>
    <property type="evidence" value="ECO:0007669"/>
    <property type="project" value="UniProtKB-UniRule"/>
</dbReference>
<dbReference type="GO" id="GO:0004488">
    <property type="term" value="F:methylenetetrahydrofolate dehydrogenase (NADP+) activity"/>
    <property type="evidence" value="ECO:0007669"/>
    <property type="project" value="UniProtKB-UniRule"/>
</dbReference>
<dbReference type="GO" id="GO:0000105">
    <property type="term" value="P:L-histidine biosynthetic process"/>
    <property type="evidence" value="ECO:0007669"/>
    <property type="project" value="UniProtKB-KW"/>
</dbReference>
<dbReference type="GO" id="GO:0009086">
    <property type="term" value="P:methionine biosynthetic process"/>
    <property type="evidence" value="ECO:0007669"/>
    <property type="project" value="UniProtKB-KW"/>
</dbReference>
<dbReference type="GO" id="GO:0006164">
    <property type="term" value="P:purine nucleotide biosynthetic process"/>
    <property type="evidence" value="ECO:0007669"/>
    <property type="project" value="UniProtKB-KW"/>
</dbReference>
<dbReference type="GO" id="GO:0035999">
    <property type="term" value="P:tetrahydrofolate interconversion"/>
    <property type="evidence" value="ECO:0007669"/>
    <property type="project" value="UniProtKB-UniRule"/>
</dbReference>
<dbReference type="CDD" id="cd01080">
    <property type="entry name" value="NAD_bind_m-THF_DH_Cyclohyd"/>
    <property type="match status" value="1"/>
</dbReference>
<dbReference type="FunFam" id="3.40.50.720:FF:000094">
    <property type="entry name" value="Bifunctional protein FolD"/>
    <property type="match status" value="1"/>
</dbReference>
<dbReference type="FunFam" id="3.40.50.10860:FF:000005">
    <property type="entry name" value="C-1-tetrahydrofolate synthase, cytoplasmic, putative"/>
    <property type="match status" value="1"/>
</dbReference>
<dbReference type="Gene3D" id="3.40.50.10860">
    <property type="entry name" value="Leucine Dehydrogenase, chain A, domain 1"/>
    <property type="match status" value="1"/>
</dbReference>
<dbReference type="Gene3D" id="3.40.50.720">
    <property type="entry name" value="NAD(P)-binding Rossmann-like Domain"/>
    <property type="match status" value="1"/>
</dbReference>
<dbReference type="HAMAP" id="MF_01576">
    <property type="entry name" value="THF_DHG_CYH"/>
    <property type="match status" value="1"/>
</dbReference>
<dbReference type="InterPro" id="IPR046346">
    <property type="entry name" value="Aminoacid_DH-like_N_sf"/>
</dbReference>
<dbReference type="InterPro" id="IPR036291">
    <property type="entry name" value="NAD(P)-bd_dom_sf"/>
</dbReference>
<dbReference type="InterPro" id="IPR000672">
    <property type="entry name" value="THF_DH/CycHdrlase"/>
</dbReference>
<dbReference type="InterPro" id="IPR020630">
    <property type="entry name" value="THF_DH/CycHdrlase_cat_dom"/>
</dbReference>
<dbReference type="InterPro" id="IPR020867">
    <property type="entry name" value="THF_DH/CycHdrlase_CS"/>
</dbReference>
<dbReference type="InterPro" id="IPR020631">
    <property type="entry name" value="THF_DH/CycHdrlase_NAD-bd_dom"/>
</dbReference>
<dbReference type="NCBIfam" id="NF010766">
    <property type="entry name" value="PRK14169.1"/>
    <property type="match status" value="1"/>
</dbReference>
<dbReference type="NCBIfam" id="NF010783">
    <property type="entry name" value="PRK14186.1"/>
    <property type="match status" value="1"/>
</dbReference>
<dbReference type="PANTHER" id="PTHR48099:SF5">
    <property type="entry name" value="C-1-TETRAHYDROFOLATE SYNTHASE, CYTOPLASMIC"/>
    <property type="match status" value="1"/>
</dbReference>
<dbReference type="PANTHER" id="PTHR48099">
    <property type="entry name" value="C-1-TETRAHYDROFOLATE SYNTHASE, CYTOPLASMIC-RELATED"/>
    <property type="match status" value="1"/>
</dbReference>
<dbReference type="Pfam" id="PF00763">
    <property type="entry name" value="THF_DHG_CYH"/>
    <property type="match status" value="1"/>
</dbReference>
<dbReference type="Pfam" id="PF02882">
    <property type="entry name" value="THF_DHG_CYH_C"/>
    <property type="match status" value="1"/>
</dbReference>
<dbReference type="PRINTS" id="PR00085">
    <property type="entry name" value="THFDHDRGNASE"/>
</dbReference>
<dbReference type="SUPFAM" id="SSF53223">
    <property type="entry name" value="Aminoacid dehydrogenase-like, N-terminal domain"/>
    <property type="match status" value="1"/>
</dbReference>
<dbReference type="SUPFAM" id="SSF51735">
    <property type="entry name" value="NAD(P)-binding Rossmann-fold domains"/>
    <property type="match status" value="1"/>
</dbReference>
<dbReference type="PROSITE" id="PS00766">
    <property type="entry name" value="THF_DHG_CYH_1"/>
    <property type="match status" value="1"/>
</dbReference>
<gene>
    <name evidence="1" type="primary">folD</name>
    <name type="ordered locus">LCA_0676</name>
</gene>
<name>FOLD_LATSS</name>
<organism>
    <name type="scientific">Latilactobacillus sakei subsp. sakei (strain 23K)</name>
    <name type="common">Lactobacillus sakei subsp. sakei</name>
    <dbReference type="NCBI Taxonomy" id="314315"/>
    <lineage>
        <taxon>Bacteria</taxon>
        <taxon>Bacillati</taxon>
        <taxon>Bacillota</taxon>
        <taxon>Bacilli</taxon>
        <taxon>Lactobacillales</taxon>
        <taxon>Lactobacillaceae</taxon>
        <taxon>Latilactobacillus</taxon>
    </lineage>
</organism>
<sequence length="283" mass="30223">MELLDGRALANELTHAQQTAVETLKEQGVTPKLVVIMVGDDPASAIYTQSKQKRATKIGMASELKRLSAETTEAELLALVKTLNDDRTVDGILVQLPLPKQINEDHVIQAIDAKKDVDGFSPVNIGQLWLNQPGLVACTPNGIMRLLAAHKIDVAGKNVVIVGRSNIVGRPLAALMLNANATVTIAHSRTANLKALTKTADILVAAIGKPHFFGIDAVKEGAVVIDVGINRLEDGSVTGDVDFEALQTHVSAMTPVPRGVGPMTITMLMEQTIEIAKERVKRG</sequence>
<protein>
    <recommendedName>
        <fullName evidence="1">Bifunctional protein FolD</fullName>
    </recommendedName>
    <domain>
        <recommendedName>
            <fullName evidence="1">Methylenetetrahydrofolate dehydrogenase</fullName>
            <ecNumber evidence="1">1.5.1.5</ecNumber>
        </recommendedName>
    </domain>
    <domain>
        <recommendedName>
            <fullName evidence="1">Methenyltetrahydrofolate cyclohydrolase</fullName>
            <ecNumber evidence="1">3.5.4.9</ecNumber>
        </recommendedName>
    </domain>
</protein>
<reference key="1">
    <citation type="journal article" date="2005" name="Nat. Biotechnol.">
        <title>The complete genome sequence of the meat-borne lactic acid bacterium Lactobacillus sakei 23K.</title>
        <authorList>
            <person name="Chaillou S."/>
            <person name="Champomier-Verges M.-C."/>
            <person name="Cornet M."/>
            <person name="Crutz-Le Coq A.-M."/>
            <person name="Dudez A.-M."/>
            <person name="Martin V."/>
            <person name="Beaufils S."/>
            <person name="Darbon-Rongere E."/>
            <person name="Bossy R."/>
            <person name="Loux V."/>
            <person name="Zagorec M."/>
        </authorList>
    </citation>
    <scope>NUCLEOTIDE SEQUENCE [LARGE SCALE GENOMIC DNA]</scope>
    <source>
        <strain>23K</strain>
    </source>
</reference>
<comment type="function">
    <text evidence="1">Catalyzes the oxidation of 5,10-methylenetetrahydrofolate to 5,10-methenyltetrahydrofolate and then the hydrolysis of 5,10-methenyltetrahydrofolate to 10-formyltetrahydrofolate.</text>
</comment>
<comment type="catalytic activity">
    <reaction evidence="1">
        <text>(6R)-5,10-methylene-5,6,7,8-tetrahydrofolate + NADP(+) = (6R)-5,10-methenyltetrahydrofolate + NADPH</text>
        <dbReference type="Rhea" id="RHEA:22812"/>
        <dbReference type="ChEBI" id="CHEBI:15636"/>
        <dbReference type="ChEBI" id="CHEBI:57455"/>
        <dbReference type="ChEBI" id="CHEBI:57783"/>
        <dbReference type="ChEBI" id="CHEBI:58349"/>
        <dbReference type="EC" id="1.5.1.5"/>
    </reaction>
</comment>
<comment type="catalytic activity">
    <reaction evidence="1">
        <text>(6R)-5,10-methenyltetrahydrofolate + H2O = (6R)-10-formyltetrahydrofolate + H(+)</text>
        <dbReference type="Rhea" id="RHEA:23700"/>
        <dbReference type="ChEBI" id="CHEBI:15377"/>
        <dbReference type="ChEBI" id="CHEBI:15378"/>
        <dbReference type="ChEBI" id="CHEBI:57455"/>
        <dbReference type="ChEBI" id="CHEBI:195366"/>
        <dbReference type="EC" id="3.5.4.9"/>
    </reaction>
</comment>
<comment type="pathway">
    <text evidence="1">One-carbon metabolism; tetrahydrofolate interconversion.</text>
</comment>
<comment type="subunit">
    <text evidence="1">Homodimer.</text>
</comment>
<comment type="similarity">
    <text evidence="1">Belongs to the tetrahydrofolate dehydrogenase/cyclohydrolase family.</text>
</comment>
<feature type="chain" id="PRO_0000268378" description="Bifunctional protein FolD">
    <location>
        <begin position="1"/>
        <end position="283"/>
    </location>
</feature>
<feature type="binding site" evidence="1">
    <location>
        <begin position="163"/>
        <end position="165"/>
    </location>
    <ligand>
        <name>NADP(+)</name>
        <dbReference type="ChEBI" id="CHEBI:58349"/>
    </ligand>
</feature>
<feature type="binding site" evidence="1">
    <location>
        <position position="188"/>
    </location>
    <ligand>
        <name>NADP(+)</name>
        <dbReference type="ChEBI" id="CHEBI:58349"/>
    </ligand>
</feature>
<feature type="binding site" evidence="1">
    <location>
        <position position="229"/>
    </location>
    <ligand>
        <name>NADP(+)</name>
        <dbReference type="ChEBI" id="CHEBI:58349"/>
    </ligand>
</feature>
<proteinExistence type="inferred from homology"/>
<keyword id="KW-0028">Amino-acid biosynthesis</keyword>
<keyword id="KW-0368">Histidine biosynthesis</keyword>
<keyword id="KW-0378">Hydrolase</keyword>
<keyword id="KW-0486">Methionine biosynthesis</keyword>
<keyword id="KW-0511">Multifunctional enzyme</keyword>
<keyword id="KW-0521">NADP</keyword>
<keyword id="KW-0554">One-carbon metabolism</keyword>
<keyword id="KW-0560">Oxidoreductase</keyword>
<keyword id="KW-0658">Purine biosynthesis</keyword>
<keyword id="KW-1185">Reference proteome</keyword>
<evidence type="ECO:0000255" key="1">
    <source>
        <dbReference type="HAMAP-Rule" id="MF_01576"/>
    </source>
</evidence>